<sequence length="238" mass="25228">MVPFLVLAQQCAPTVAPQTMAAIVQVESGFNPYAIGVVGGRLVRQPVSLDEAITTAQSLEAKGWNFSLGIAQVNRYNLPKYGSTYAQAFDPCKNLKMGSKILEDCYRRAIVKMPGQEQGALRAAFSCYYAGNFTGGFKTKPGSPSYVQKVVASADVTTKPIVVVPMIRKTPDAAAAVAAPVKKRQPADRNSVLVDLHPSSQSMPATGAANAPVRLKTEQPATTDAPPGKDNTDGVVVF</sequence>
<organism>
    <name type="scientific">Brucella melitensis biotype 1 (strain ATCC 23456 / CCUG 17765 / NCTC 10094 / 16M)</name>
    <dbReference type="NCBI Taxonomy" id="224914"/>
    <lineage>
        <taxon>Bacteria</taxon>
        <taxon>Pseudomonadati</taxon>
        <taxon>Pseudomonadota</taxon>
        <taxon>Alphaproteobacteria</taxon>
        <taxon>Hyphomicrobiales</taxon>
        <taxon>Brucellaceae</taxon>
        <taxon>Brucella/Ochrobactrum group</taxon>
        <taxon>Brucella</taxon>
    </lineage>
</organism>
<reference key="1">
    <citation type="journal article" date="2002" name="Proc. Natl. Acad. Sci. U.S.A.">
        <title>The genome sequence of the facultative intracellular pathogen Brucella melitensis.</title>
        <authorList>
            <person name="DelVecchio V.G."/>
            <person name="Kapatral V."/>
            <person name="Redkar R.J."/>
            <person name="Patra G."/>
            <person name="Mujer C."/>
            <person name="Los T."/>
            <person name="Ivanova N."/>
            <person name="Anderson I."/>
            <person name="Bhattacharyya A."/>
            <person name="Lykidis A."/>
            <person name="Reznik G."/>
            <person name="Jablonski L."/>
            <person name="Larsen N."/>
            <person name="D'Souza M."/>
            <person name="Bernal A."/>
            <person name="Mazur M."/>
            <person name="Goltsman E."/>
            <person name="Selkov E."/>
            <person name="Elzer P.H."/>
            <person name="Hagius S."/>
            <person name="O'Callaghan D."/>
            <person name="Letesson J.-J."/>
            <person name="Haselkorn R."/>
            <person name="Kyrpides N.C."/>
            <person name="Overbeek R."/>
        </authorList>
    </citation>
    <scope>NUCLEOTIDE SEQUENCE [LARGE SCALE GENOMIC DNA]</scope>
    <source>
        <strain>ATCC 23456 / CCUG 17765 / NCTC 10094 / 16M</strain>
    </source>
</reference>
<evidence type="ECO:0000256" key="1">
    <source>
        <dbReference type="SAM" id="MobiDB-lite"/>
    </source>
</evidence>
<evidence type="ECO:0000305" key="2"/>
<accession>Q8YDZ5</accession>
<gene>
    <name type="primary">virB1</name>
    <name type="ordered locus">BMEII0025</name>
</gene>
<protein>
    <recommendedName>
        <fullName>Type IV secretion system protein virB1</fullName>
    </recommendedName>
</protein>
<dbReference type="EMBL" id="AE008918">
    <property type="protein sequence ID" value="AAL53266.1"/>
    <property type="molecule type" value="Genomic_DNA"/>
</dbReference>
<dbReference type="PIR" id="AG3512">
    <property type="entry name" value="AG3512"/>
</dbReference>
<dbReference type="RefSeq" id="WP_004681227.1">
    <property type="nucleotide sequence ID" value="NZ_GG703779.1"/>
</dbReference>
<dbReference type="CAZy" id="GH23">
    <property type="family name" value="Glycoside Hydrolase Family 23"/>
</dbReference>
<dbReference type="GeneID" id="29595409"/>
<dbReference type="KEGG" id="bme:BMEII0025"/>
<dbReference type="KEGG" id="bmel:DK63_2094"/>
<dbReference type="PATRIC" id="fig|224914.52.peg.2195"/>
<dbReference type="eggNOG" id="COG0741">
    <property type="taxonomic scope" value="Bacteria"/>
</dbReference>
<dbReference type="PRO" id="PR:Q8YDZ5"/>
<dbReference type="Proteomes" id="UP000000419">
    <property type="component" value="Chromosome II"/>
</dbReference>
<dbReference type="CDD" id="cd16892">
    <property type="entry name" value="LT_VirB1-like"/>
    <property type="match status" value="1"/>
</dbReference>
<dbReference type="Gene3D" id="1.10.530.10">
    <property type="match status" value="1"/>
</dbReference>
<dbReference type="InterPro" id="IPR023346">
    <property type="entry name" value="Lysozyme-like_dom_sf"/>
</dbReference>
<dbReference type="InterPro" id="IPR008258">
    <property type="entry name" value="Transglycosylase_SLT_dom_1"/>
</dbReference>
<dbReference type="Pfam" id="PF01464">
    <property type="entry name" value="SLT"/>
    <property type="match status" value="1"/>
</dbReference>
<dbReference type="SUPFAM" id="SSF53955">
    <property type="entry name" value="Lysozyme-like"/>
    <property type="match status" value="1"/>
</dbReference>
<proteinExistence type="inferred from homology"/>
<comment type="similarity">
    <text evidence="2">Belongs to the virb1 family.</text>
</comment>
<keyword id="KW-0843">Virulence</keyword>
<feature type="chain" id="PRO_0000289553" description="Type IV secretion system protein virB1">
    <location>
        <begin position="1"/>
        <end position="238"/>
    </location>
</feature>
<feature type="region of interest" description="Disordered" evidence="1">
    <location>
        <begin position="197"/>
        <end position="238"/>
    </location>
</feature>
<name>VIRB1_BRUME</name>